<dbReference type="EMBL" id="AJ248287">
    <property type="protein sequence ID" value="CAB50302.1"/>
    <property type="molecule type" value="Genomic_DNA"/>
</dbReference>
<dbReference type="EMBL" id="HE613800">
    <property type="protein sequence ID" value="CCE70840.1"/>
    <property type="molecule type" value="Genomic_DNA"/>
</dbReference>
<dbReference type="PIR" id="A75051">
    <property type="entry name" value="A75051"/>
</dbReference>
<dbReference type="RefSeq" id="WP_010868512.1">
    <property type="nucleotide sequence ID" value="NC_000868.1"/>
</dbReference>
<dbReference type="SMR" id="Q9UYW0"/>
<dbReference type="STRING" id="272844.PAB1451"/>
<dbReference type="KEGG" id="pab:PAB1451"/>
<dbReference type="PATRIC" id="fig|272844.11.peg.1484"/>
<dbReference type="eggNOG" id="arCOG00235">
    <property type="taxonomic scope" value="Archaea"/>
</dbReference>
<dbReference type="HOGENOM" id="CLU_028458_5_0_2"/>
<dbReference type="OrthoDB" id="6242at2157"/>
<dbReference type="PhylomeDB" id="Q9UYW0"/>
<dbReference type="Proteomes" id="UP000000810">
    <property type="component" value="Chromosome"/>
</dbReference>
<dbReference type="Proteomes" id="UP000009139">
    <property type="component" value="Chromosome"/>
</dbReference>
<dbReference type="GO" id="GO:0018773">
    <property type="term" value="F:acetylpyruvate hydrolase activity"/>
    <property type="evidence" value="ECO:0007669"/>
    <property type="project" value="TreeGrafter"/>
</dbReference>
<dbReference type="GO" id="GO:0046872">
    <property type="term" value="F:metal ion binding"/>
    <property type="evidence" value="ECO:0007669"/>
    <property type="project" value="UniProtKB-KW"/>
</dbReference>
<dbReference type="FunFam" id="3.90.850.10:FF:000002">
    <property type="entry name" value="2-hydroxyhepta-2,4-diene-1,7-dioate isomerase"/>
    <property type="match status" value="1"/>
</dbReference>
<dbReference type="Gene3D" id="3.90.850.10">
    <property type="entry name" value="Fumarylacetoacetase-like, C-terminal domain"/>
    <property type="match status" value="1"/>
</dbReference>
<dbReference type="InterPro" id="IPR011234">
    <property type="entry name" value="Fumarylacetoacetase-like_C"/>
</dbReference>
<dbReference type="InterPro" id="IPR036663">
    <property type="entry name" value="Fumarylacetoacetase_C_sf"/>
</dbReference>
<dbReference type="PANTHER" id="PTHR11820">
    <property type="entry name" value="ACYLPYRUVASE"/>
    <property type="match status" value="1"/>
</dbReference>
<dbReference type="PANTHER" id="PTHR11820:SF7">
    <property type="entry name" value="ACYLPYRUVASE FAHD1, MITOCHONDRIAL"/>
    <property type="match status" value="1"/>
</dbReference>
<dbReference type="Pfam" id="PF01557">
    <property type="entry name" value="FAA_hydrolase"/>
    <property type="match status" value="1"/>
</dbReference>
<dbReference type="SUPFAM" id="SSF56529">
    <property type="entry name" value="FAH"/>
    <property type="match status" value="1"/>
</dbReference>
<accession>Q9UYW0</accession>
<accession>G8ZHK3</accession>
<protein>
    <recommendedName>
        <fullName>Uncharacterized protein PYRAB13970</fullName>
    </recommendedName>
</protein>
<comment type="similarity">
    <text evidence="2">Belongs to the FAH family.</text>
</comment>
<evidence type="ECO:0000250" key="1"/>
<evidence type="ECO:0000305" key="2"/>
<keyword id="KW-0479">Metal-binding</keyword>
<organism>
    <name type="scientific">Pyrococcus abyssi (strain GE5 / Orsay)</name>
    <dbReference type="NCBI Taxonomy" id="272844"/>
    <lineage>
        <taxon>Archaea</taxon>
        <taxon>Methanobacteriati</taxon>
        <taxon>Methanobacteriota</taxon>
        <taxon>Thermococci</taxon>
        <taxon>Thermococcales</taxon>
        <taxon>Thermococcaceae</taxon>
        <taxon>Pyrococcus</taxon>
    </lineage>
</organism>
<feature type="chain" id="PRO_0000156839" description="Uncharacterized protein PYRAB13970">
    <location>
        <begin position="1"/>
        <end position="225"/>
    </location>
</feature>
<feature type="binding site" evidence="1">
    <location>
        <position position="69"/>
    </location>
    <ligand>
        <name>a divalent metal cation</name>
        <dbReference type="ChEBI" id="CHEBI:60240"/>
    </ligand>
</feature>
<feature type="binding site" evidence="1">
    <location>
        <position position="71"/>
    </location>
    <ligand>
        <name>a divalent metal cation</name>
        <dbReference type="ChEBI" id="CHEBI:60240"/>
    </ligand>
</feature>
<feature type="binding site" evidence="1">
    <location>
        <position position="100"/>
    </location>
    <ligand>
        <name>a divalent metal cation</name>
        <dbReference type="ChEBI" id="CHEBI:60240"/>
    </ligand>
</feature>
<sequence length="225" mass="25010">MIRLPFRDGYYEVRPTKIIALAKNYAEHAREMGSEPPEEPVIFLKPPSALIGPNSVIVLPRRSKRVDHEVELAVIIGKRAKNVPAEKAFDYILGYTILLDITARDLQAEARKKGYPWTVSKGFDTFAPIGPRIVDKRELDPSDLEIGLKVNGKVRQLGRTSEMIFKIPELIEYISSIMTLEPGDIIATGTPPGVGPLRHGDKIEAWVEGIGVLEEEVIAEDSILC</sequence>
<reference key="1">
    <citation type="journal article" date="2003" name="Mol. Microbiol.">
        <title>An integrated analysis of the genome of the hyperthermophilic archaeon Pyrococcus abyssi.</title>
        <authorList>
            <person name="Cohen G.N."/>
            <person name="Barbe V."/>
            <person name="Flament D."/>
            <person name="Galperin M."/>
            <person name="Heilig R."/>
            <person name="Lecompte O."/>
            <person name="Poch O."/>
            <person name="Prieur D."/>
            <person name="Querellou J."/>
            <person name="Ripp R."/>
            <person name="Thierry J.-C."/>
            <person name="Van der Oost J."/>
            <person name="Weissenbach J."/>
            <person name="Zivanovic Y."/>
            <person name="Forterre P."/>
        </authorList>
    </citation>
    <scope>NUCLEOTIDE SEQUENCE [LARGE SCALE GENOMIC DNA]</scope>
    <source>
        <strain>GE5 / Orsay</strain>
    </source>
</reference>
<reference key="2">
    <citation type="journal article" date="2012" name="Curr. Microbiol.">
        <title>Re-annotation of two hyperthermophilic archaea Pyrococcus abyssi GE5 and Pyrococcus furiosus DSM 3638.</title>
        <authorList>
            <person name="Gao J."/>
            <person name="Wang J."/>
        </authorList>
    </citation>
    <scope>GENOME REANNOTATION</scope>
    <source>
        <strain>GE5 / Orsay</strain>
    </source>
</reference>
<proteinExistence type="inferred from homology"/>
<gene>
    <name type="ordered locus">PYRAB13970</name>
    <name type="ORF">PAB1451</name>
</gene>
<name>Y1397_PYRAB</name>